<proteinExistence type="inferred from homology"/>
<sequence>MENSSSSEGRDPSAFLGEIIGAPVTVKLNSGVVYKGELQSVDGYMNIALERSEEFVDGKLKRSYGDAFIRGNNVLYISAQ</sequence>
<name>LSM6_ASPFU</name>
<dbReference type="EMBL" id="AAHF01000006">
    <property type="protein sequence ID" value="EAL88484.1"/>
    <property type="status" value="ALT_SEQ"/>
    <property type="molecule type" value="Genomic_DNA"/>
</dbReference>
<dbReference type="RefSeq" id="XP_750522.1">
    <property type="nucleotide sequence ID" value="XM_745429.1"/>
</dbReference>
<dbReference type="SMR" id="Q4WNI0"/>
<dbReference type="FunCoup" id="Q4WNI0">
    <property type="interactions" value="786"/>
</dbReference>
<dbReference type="STRING" id="330879.Q4WNI0"/>
<dbReference type="GeneID" id="3508769"/>
<dbReference type="KEGG" id="afm:AFUA_6G06325"/>
<dbReference type="HOGENOM" id="CLU_076902_7_4_1"/>
<dbReference type="InParanoid" id="Q4WNI0"/>
<dbReference type="OrthoDB" id="268799at2759"/>
<dbReference type="Proteomes" id="UP000002530">
    <property type="component" value="Chromosome 6"/>
</dbReference>
<dbReference type="GO" id="GO:0005730">
    <property type="term" value="C:nucleolus"/>
    <property type="evidence" value="ECO:0000318"/>
    <property type="project" value="GO_Central"/>
</dbReference>
<dbReference type="GO" id="GO:0000932">
    <property type="term" value="C:P-body"/>
    <property type="evidence" value="ECO:0000318"/>
    <property type="project" value="GO_Central"/>
</dbReference>
<dbReference type="GO" id="GO:0005732">
    <property type="term" value="C:sno(s)RNA-containing ribonucleoprotein complex"/>
    <property type="evidence" value="ECO:0000318"/>
    <property type="project" value="GO_Central"/>
</dbReference>
<dbReference type="GO" id="GO:0005681">
    <property type="term" value="C:spliceosomal complex"/>
    <property type="evidence" value="ECO:0007669"/>
    <property type="project" value="UniProtKB-KW"/>
</dbReference>
<dbReference type="GO" id="GO:0046540">
    <property type="term" value="C:U4/U6 x U5 tri-snRNP complex"/>
    <property type="evidence" value="ECO:0000318"/>
    <property type="project" value="GO_Central"/>
</dbReference>
<dbReference type="GO" id="GO:0005688">
    <property type="term" value="C:U6 snRNP"/>
    <property type="evidence" value="ECO:0000318"/>
    <property type="project" value="GO_Central"/>
</dbReference>
<dbReference type="GO" id="GO:0003723">
    <property type="term" value="F:RNA binding"/>
    <property type="evidence" value="ECO:0000318"/>
    <property type="project" value="GO_Central"/>
</dbReference>
<dbReference type="GO" id="GO:0030490">
    <property type="term" value="P:maturation of SSU-rRNA"/>
    <property type="evidence" value="ECO:0000318"/>
    <property type="project" value="GO_Central"/>
</dbReference>
<dbReference type="GO" id="GO:0000398">
    <property type="term" value="P:mRNA splicing, via spliceosome"/>
    <property type="evidence" value="ECO:0000318"/>
    <property type="project" value="GO_Central"/>
</dbReference>
<dbReference type="GO" id="GO:0008033">
    <property type="term" value="P:tRNA processing"/>
    <property type="evidence" value="ECO:0007669"/>
    <property type="project" value="UniProtKB-KW"/>
</dbReference>
<dbReference type="CDD" id="cd01726">
    <property type="entry name" value="LSm6"/>
    <property type="match status" value="1"/>
</dbReference>
<dbReference type="FunFam" id="2.30.30.100:FF:000037">
    <property type="entry name" value="U6 snRNA-associated Sm-like protein LSm6"/>
    <property type="match status" value="1"/>
</dbReference>
<dbReference type="Gene3D" id="2.30.30.100">
    <property type="match status" value="1"/>
</dbReference>
<dbReference type="InterPro" id="IPR016487">
    <property type="entry name" value="Lsm6/sSmF"/>
</dbReference>
<dbReference type="InterPro" id="IPR010920">
    <property type="entry name" value="LSM_dom_sf"/>
</dbReference>
<dbReference type="InterPro" id="IPR047575">
    <property type="entry name" value="Sm"/>
</dbReference>
<dbReference type="InterPro" id="IPR001163">
    <property type="entry name" value="Sm_dom_euk/arc"/>
</dbReference>
<dbReference type="PANTHER" id="PTHR11021">
    <property type="entry name" value="SMALL NUCLEAR RIBONUCLEOPROTEIN F SNRNP-F"/>
    <property type="match status" value="1"/>
</dbReference>
<dbReference type="PANTHER" id="PTHR11021:SF1">
    <property type="entry name" value="U6 SNRNA-ASSOCIATED SM-LIKE PROTEIN LSM6"/>
    <property type="match status" value="1"/>
</dbReference>
<dbReference type="Pfam" id="PF01423">
    <property type="entry name" value="LSM"/>
    <property type="match status" value="1"/>
</dbReference>
<dbReference type="PIRSF" id="PIRSF006609">
    <property type="entry name" value="snRNP_SmF"/>
    <property type="match status" value="1"/>
</dbReference>
<dbReference type="SMART" id="SM00651">
    <property type="entry name" value="Sm"/>
    <property type="match status" value="1"/>
</dbReference>
<dbReference type="SUPFAM" id="SSF50182">
    <property type="entry name" value="Sm-like ribonucleoproteins"/>
    <property type="match status" value="1"/>
</dbReference>
<dbReference type="PROSITE" id="PS52002">
    <property type="entry name" value="SM"/>
    <property type="match status" value="1"/>
</dbReference>
<keyword id="KW-0963">Cytoplasm</keyword>
<keyword id="KW-0507">mRNA processing</keyword>
<keyword id="KW-0508">mRNA splicing</keyword>
<keyword id="KW-0539">Nucleus</keyword>
<keyword id="KW-1185">Reference proteome</keyword>
<keyword id="KW-0687">Ribonucleoprotein</keyword>
<keyword id="KW-0694">RNA-binding</keyword>
<keyword id="KW-0698">rRNA processing</keyword>
<keyword id="KW-0747">Spliceosome</keyword>
<keyword id="KW-0819">tRNA processing</keyword>
<comment type="function">
    <text evidence="1">Component of LSm protein complexes, which are involved in RNA processing and may function in a chaperone-like manner, facilitating the efficient association of RNA processing factors with their substrates. Component of the cytoplasmic LSM1-LSM7 complex, which is thought to be involved in mRNA degradation by activating the decapping step in the 5'-to-3' mRNA decay pathway. Component of the nuclear LSM2-LSM8 complex, which is involved in splicing of nuclear mRNAs. LSM2-LSM8 associates with multiple snRNP complexes containing the U6 snRNA (U4/U6 di-snRNP, spliceosomal U4/U6.U5 tri-snRNP, and free U6 snRNP). It binds directly to the 3'-terminal U-tract of U6 snRNA and plays a role in the biogenesis and stability of the U6 snRNP and U4/U6 snRNP complexes. LSM2-LSM8 probably also is involved degradation of nuclear pre-mRNA by targeting them for decapping, and in processing of pre-tRNAs, pre-rRNAs and U3 snoRNA (By similarity).</text>
</comment>
<comment type="subunit">
    <text evidence="1">Component of the heptameric LSM1-LSM7 complex, which consists of lsm1, lsm2, lsm3, lsm4, lsm5, lsm6 and lsm7. Component of the heptameric LSM2-LSM8 complex, which consists of lsm2, lsm3, lsm4, lsm5, lsm6, lsm7 and lsm8. The LSm subunits form a seven-membered ring structure with a doughnut shape (By similarity).</text>
</comment>
<comment type="subcellular location">
    <subcellularLocation>
        <location evidence="1">Cytoplasm</location>
    </subcellularLocation>
    <subcellularLocation>
        <location evidence="1">Nucleus</location>
    </subcellularLocation>
</comment>
<comment type="similarity">
    <text evidence="3">Belongs to the snRNP Sm proteins family. SmF/LSm6 subfamily.</text>
</comment>
<comment type="sequence caution" evidence="3">
    <conflict type="erroneous gene model prediction">
        <sequence resource="EMBL-CDS" id="EAL88484"/>
    </conflict>
</comment>
<reference key="1">
    <citation type="journal article" date="2005" name="Nature">
        <title>Genomic sequence of the pathogenic and allergenic filamentous fungus Aspergillus fumigatus.</title>
        <authorList>
            <person name="Nierman W.C."/>
            <person name="Pain A."/>
            <person name="Anderson M.J."/>
            <person name="Wortman J.R."/>
            <person name="Kim H.S."/>
            <person name="Arroyo J."/>
            <person name="Berriman M."/>
            <person name="Abe K."/>
            <person name="Archer D.B."/>
            <person name="Bermejo C."/>
            <person name="Bennett J.W."/>
            <person name="Bowyer P."/>
            <person name="Chen D."/>
            <person name="Collins M."/>
            <person name="Coulsen R."/>
            <person name="Davies R."/>
            <person name="Dyer P.S."/>
            <person name="Farman M.L."/>
            <person name="Fedorova N."/>
            <person name="Fedorova N.D."/>
            <person name="Feldblyum T.V."/>
            <person name="Fischer R."/>
            <person name="Fosker N."/>
            <person name="Fraser A."/>
            <person name="Garcia J.L."/>
            <person name="Garcia M.J."/>
            <person name="Goble A."/>
            <person name="Goldman G.H."/>
            <person name="Gomi K."/>
            <person name="Griffith-Jones S."/>
            <person name="Gwilliam R."/>
            <person name="Haas B.J."/>
            <person name="Haas H."/>
            <person name="Harris D.E."/>
            <person name="Horiuchi H."/>
            <person name="Huang J."/>
            <person name="Humphray S."/>
            <person name="Jimenez J."/>
            <person name="Keller N."/>
            <person name="Khouri H."/>
            <person name="Kitamoto K."/>
            <person name="Kobayashi T."/>
            <person name="Konzack S."/>
            <person name="Kulkarni R."/>
            <person name="Kumagai T."/>
            <person name="Lafton A."/>
            <person name="Latge J.-P."/>
            <person name="Li W."/>
            <person name="Lord A."/>
            <person name="Lu C."/>
            <person name="Majoros W.H."/>
            <person name="May G.S."/>
            <person name="Miller B.L."/>
            <person name="Mohamoud Y."/>
            <person name="Molina M."/>
            <person name="Monod M."/>
            <person name="Mouyna I."/>
            <person name="Mulligan S."/>
            <person name="Murphy L.D."/>
            <person name="O'Neil S."/>
            <person name="Paulsen I."/>
            <person name="Penalva M.A."/>
            <person name="Pertea M."/>
            <person name="Price C."/>
            <person name="Pritchard B.L."/>
            <person name="Quail M.A."/>
            <person name="Rabbinowitsch E."/>
            <person name="Rawlins N."/>
            <person name="Rajandream M.A."/>
            <person name="Reichard U."/>
            <person name="Renauld H."/>
            <person name="Robson G.D."/>
            <person name="Rodriguez de Cordoba S."/>
            <person name="Rodriguez-Pena J.M."/>
            <person name="Ronning C.M."/>
            <person name="Rutter S."/>
            <person name="Salzberg S.L."/>
            <person name="Sanchez M."/>
            <person name="Sanchez-Ferrero J.C."/>
            <person name="Saunders D."/>
            <person name="Seeger K."/>
            <person name="Squares R."/>
            <person name="Squares S."/>
            <person name="Takeuchi M."/>
            <person name="Tekaia F."/>
            <person name="Turner G."/>
            <person name="Vazquez de Aldana C.R."/>
            <person name="Weidman J."/>
            <person name="White O."/>
            <person name="Woodward J.R."/>
            <person name="Yu J.-H."/>
            <person name="Fraser C.M."/>
            <person name="Galagan J.E."/>
            <person name="Asai K."/>
            <person name="Machida M."/>
            <person name="Hall N."/>
            <person name="Barrell B.G."/>
            <person name="Denning D.W."/>
        </authorList>
    </citation>
    <scope>NUCLEOTIDE SEQUENCE [LARGE SCALE GENOMIC DNA]</scope>
    <source>
        <strain>ATCC MYA-4609 / CBS 101355 / FGSC A1100 / Af293</strain>
    </source>
</reference>
<evidence type="ECO:0000250" key="1"/>
<evidence type="ECO:0000255" key="2">
    <source>
        <dbReference type="PROSITE-ProRule" id="PRU01346"/>
    </source>
</evidence>
<evidence type="ECO:0000305" key="3"/>
<feature type="chain" id="PRO_0000333589" description="U6 snRNA-associated Sm-like protein LSm6">
    <location>
        <begin position="1"/>
        <end position="80"/>
    </location>
</feature>
<feature type="domain" description="Sm" evidence="2">
    <location>
        <begin position="11"/>
        <end position="80"/>
    </location>
</feature>
<organism>
    <name type="scientific">Aspergillus fumigatus (strain ATCC MYA-4609 / CBS 101355 / FGSC A1100 / Af293)</name>
    <name type="common">Neosartorya fumigata</name>
    <dbReference type="NCBI Taxonomy" id="330879"/>
    <lineage>
        <taxon>Eukaryota</taxon>
        <taxon>Fungi</taxon>
        <taxon>Dikarya</taxon>
        <taxon>Ascomycota</taxon>
        <taxon>Pezizomycotina</taxon>
        <taxon>Eurotiomycetes</taxon>
        <taxon>Eurotiomycetidae</taxon>
        <taxon>Eurotiales</taxon>
        <taxon>Aspergillaceae</taxon>
        <taxon>Aspergillus</taxon>
        <taxon>Aspergillus subgen. Fumigati</taxon>
    </lineage>
</organism>
<gene>
    <name type="primary">lsm6</name>
    <name type="ORF">AFUA_6G06325</name>
</gene>
<accession>Q4WNI0</accession>
<protein>
    <recommendedName>
        <fullName>U6 snRNA-associated Sm-like protein LSm6</fullName>
    </recommendedName>
</protein>